<evidence type="ECO:0000250" key="1"/>
<evidence type="ECO:0000255" key="2">
    <source>
        <dbReference type="PROSITE-ProRule" id="PRU00040"/>
    </source>
</evidence>
<evidence type="ECO:0000305" key="3"/>
<dbReference type="EMBL" id="AY356354">
    <property type="protein sequence ID" value="AAQ18640.1"/>
    <property type="molecule type" value="mRNA"/>
</dbReference>
<dbReference type="EMBL" id="AY346127">
    <property type="protein sequence ID" value="AAQ24215.1"/>
    <property type="molecule type" value="mRNA"/>
</dbReference>
<dbReference type="SMR" id="Q7SZV0"/>
<dbReference type="GO" id="GO:0005576">
    <property type="term" value="C:extracellular region"/>
    <property type="evidence" value="ECO:0007669"/>
    <property type="project" value="UniProtKB-SubCell"/>
</dbReference>
<dbReference type="GO" id="GO:0046872">
    <property type="term" value="F:metal ion binding"/>
    <property type="evidence" value="ECO:0007669"/>
    <property type="project" value="UniProtKB-KW"/>
</dbReference>
<dbReference type="GO" id="GO:0090729">
    <property type="term" value="F:toxin activity"/>
    <property type="evidence" value="ECO:0007669"/>
    <property type="project" value="UniProtKB-KW"/>
</dbReference>
<dbReference type="FunFam" id="3.10.100.10:FF:000087">
    <property type="entry name" value="Snaclec rhodocetin subunit delta"/>
    <property type="match status" value="1"/>
</dbReference>
<dbReference type="Gene3D" id="3.10.100.10">
    <property type="entry name" value="Mannose-Binding Protein A, subunit A"/>
    <property type="match status" value="1"/>
</dbReference>
<dbReference type="InterPro" id="IPR001304">
    <property type="entry name" value="C-type_lectin-like"/>
</dbReference>
<dbReference type="InterPro" id="IPR016186">
    <property type="entry name" value="C-type_lectin-like/link_sf"/>
</dbReference>
<dbReference type="InterPro" id="IPR050111">
    <property type="entry name" value="C-type_lectin/snaclec_domain"/>
</dbReference>
<dbReference type="InterPro" id="IPR018378">
    <property type="entry name" value="C-type_lectin_CS"/>
</dbReference>
<dbReference type="InterPro" id="IPR016187">
    <property type="entry name" value="CTDL_fold"/>
</dbReference>
<dbReference type="PANTHER" id="PTHR22803">
    <property type="entry name" value="MANNOSE, PHOSPHOLIPASE, LECTIN RECEPTOR RELATED"/>
    <property type="match status" value="1"/>
</dbReference>
<dbReference type="Pfam" id="PF00059">
    <property type="entry name" value="Lectin_C"/>
    <property type="match status" value="1"/>
</dbReference>
<dbReference type="SMART" id="SM00034">
    <property type="entry name" value="CLECT"/>
    <property type="match status" value="1"/>
</dbReference>
<dbReference type="SUPFAM" id="SSF56436">
    <property type="entry name" value="C-type lectin-like"/>
    <property type="match status" value="1"/>
</dbReference>
<dbReference type="PROSITE" id="PS00615">
    <property type="entry name" value="C_TYPE_LECTIN_1"/>
    <property type="match status" value="1"/>
</dbReference>
<dbReference type="PROSITE" id="PS50041">
    <property type="entry name" value="C_TYPE_LECTIN_2"/>
    <property type="match status" value="1"/>
</dbReference>
<comment type="function">
    <text evidence="1">Anticoagulant protein which binds to the gamma-carboxyglutamic acid-domain regions of factor IX (F9) (but not factor X) in the presence of calcium with a 1 to 1 stoichiometry.</text>
</comment>
<comment type="subunit">
    <text evidence="1">Heterodimer of subunits A and B; disulfide-linked.</text>
</comment>
<comment type="subcellular location">
    <subcellularLocation>
        <location evidence="1">Secreted</location>
    </subcellularLocation>
</comment>
<comment type="tissue specificity">
    <text>Expressed by the venom gland.</text>
</comment>
<comment type="similarity">
    <text evidence="3">Belongs to the snaclec family.</text>
</comment>
<feature type="chain" id="PRO_0000355237" description="Snaclec coagulation factor IX-binding protein subunit A">
    <location>
        <begin position="1" status="less than"/>
        <end position="121"/>
    </location>
</feature>
<feature type="domain" description="C-type lectin" evidence="2">
    <location>
        <begin position="1"/>
        <end position="120"/>
    </location>
</feature>
<feature type="binding site" evidence="1">
    <location>
        <position position="33"/>
    </location>
    <ligand>
        <name>Ca(2+)</name>
        <dbReference type="ChEBI" id="CHEBI:29108"/>
    </ligand>
</feature>
<feature type="binding site" evidence="1">
    <location>
        <position position="35"/>
    </location>
    <ligand>
        <name>Ca(2+)</name>
        <dbReference type="ChEBI" id="CHEBI:29108"/>
    </ligand>
</feature>
<feature type="binding site" evidence="1">
    <location>
        <position position="39"/>
    </location>
    <ligand>
        <name>Ca(2+)</name>
        <dbReference type="ChEBI" id="CHEBI:29108"/>
    </ligand>
</feature>
<feature type="binding site" evidence="1">
    <location>
        <position position="120"/>
    </location>
    <ligand>
        <name>Ca(2+)</name>
        <dbReference type="ChEBI" id="CHEBI:29108"/>
    </ligand>
</feature>
<feature type="disulfide bond" evidence="2">
    <location>
        <begin position="22"/>
        <end position="119"/>
    </location>
</feature>
<feature type="disulfide bond" description="Interchain (with C-98 in subunit B)" evidence="2">
    <location>
        <position position="71"/>
    </location>
</feature>
<feature type="disulfide bond" evidence="2">
    <location>
        <begin position="94"/>
        <end position="111"/>
    </location>
</feature>
<feature type="non-terminal residue">
    <location>
        <position position="1"/>
    </location>
</feature>
<organism>
    <name type="scientific">Gloydius halys</name>
    <name type="common">Chinese water mocassin</name>
    <name type="synonym">Agkistrodon halys</name>
    <dbReference type="NCBI Taxonomy" id="8714"/>
    <lineage>
        <taxon>Eukaryota</taxon>
        <taxon>Metazoa</taxon>
        <taxon>Chordata</taxon>
        <taxon>Craniata</taxon>
        <taxon>Vertebrata</taxon>
        <taxon>Euteleostomi</taxon>
        <taxon>Lepidosauria</taxon>
        <taxon>Squamata</taxon>
        <taxon>Bifurcata</taxon>
        <taxon>Unidentata</taxon>
        <taxon>Episquamata</taxon>
        <taxon>Toxicofera</taxon>
        <taxon>Serpentes</taxon>
        <taxon>Colubroidea</taxon>
        <taxon>Viperidae</taxon>
        <taxon>Crotalinae</taxon>
        <taxon>Gloydius</taxon>
    </lineage>
</organism>
<keyword id="KW-1203">Blood coagulation cascade inhibiting toxin</keyword>
<keyword id="KW-0106">Calcium</keyword>
<keyword id="KW-1015">Disulfide bond</keyword>
<keyword id="KW-1199">Hemostasis impairing toxin</keyword>
<keyword id="KW-0479">Metal-binding</keyword>
<keyword id="KW-0964">Secreted</keyword>
<keyword id="KW-0800">Toxin</keyword>
<name>SLA_GLOHA</name>
<reference key="1">
    <citation type="submission" date="2003-07" db="EMBL/GenBank/DDBJ databases">
        <title>Crystal structure of AHP IX-bp at pH 6.5 and 7.5 and implications for the pH-dependent mechanism of AHP IX-bp binding to coagulation factor IX.</title>
        <authorList>
            <person name="Zang J."/>
            <person name="Teng M."/>
            <person name="Niu L."/>
        </authorList>
    </citation>
    <scope>NUCLEOTIDE SEQUENCE [MRNA]</scope>
    <source>
        <tissue>Venom gland</tissue>
    </source>
</reference>
<proteinExistence type="evidence at transcript level"/>
<protein>
    <recommendedName>
        <fullName>Snaclec coagulation factor IX-binding protein subunit A</fullName>
        <shortName>IX-bp subunit A</shortName>
    </recommendedName>
</protein>
<accession>Q7SZV0</accession>
<sequence>YEGHCYQTFKLFKTWADAESFCTEQAKGGHLVSIESDGEADFVAQLVAENIQKTEIYVWVGLRVQGKEQQCSSEWSDGSSVSYQNWIEAESKTCLGLQKETEFRKWFNIYCGERNPFVCEA</sequence>